<name>Y159_UREPA</name>
<accession>Q9PQY5</accession>
<feature type="chain" id="PRO_0000220818" description="Uncharacterized protein UU159">
    <location>
        <begin position="1"/>
        <end position="182"/>
    </location>
</feature>
<feature type="transmembrane region" description="Helical" evidence="1">
    <location>
        <begin position="29"/>
        <end position="49"/>
    </location>
</feature>
<feature type="transmembrane region" description="Helical" evidence="1">
    <location>
        <begin position="63"/>
        <end position="83"/>
    </location>
</feature>
<keyword id="KW-1003">Cell membrane</keyword>
<keyword id="KW-0472">Membrane</keyword>
<keyword id="KW-1185">Reference proteome</keyword>
<keyword id="KW-0812">Transmembrane</keyword>
<keyword id="KW-1133">Transmembrane helix</keyword>
<reference key="1">
    <citation type="journal article" date="2000" name="Nature">
        <title>The complete sequence of the mucosal pathogen Ureaplasma urealyticum.</title>
        <authorList>
            <person name="Glass J.I."/>
            <person name="Lefkowitz E.J."/>
            <person name="Glass J.S."/>
            <person name="Heiner C.R."/>
            <person name="Chen E.Y."/>
            <person name="Cassell G.H."/>
        </authorList>
    </citation>
    <scope>NUCLEOTIDE SEQUENCE [LARGE SCALE GENOMIC DNA]</scope>
    <source>
        <strain>ATCC 700970</strain>
    </source>
</reference>
<dbReference type="EMBL" id="AF222894">
    <property type="protein sequence ID" value="AAF30565.1"/>
    <property type="molecule type" value="Genomic_DNA"/>
</dbReference>
<dbReference type="RefSeq" id="WP_010891692.1">
    <property type="nucleotide sequence ID" value="NC_002162.1"/>
</dbReference>
<dbReference type="SMR" id="Q9PQY5"/>
<dbReference type="STRING" id="273119.UU159"/>
<dbReference type="EnsemblBacteria" id="AAF30565">
    <property type="protein sequence ID" value="AAF30565"/>
    <property type="gene ID" value="UU159"/>
</dbReference>
<dbReference type="GeneID" id="29672762"/>
<dbReference type="KEGG" id="uur:UU159"/>
<dbReference type="PATRIC" id="fig|273119.6.peg.165"/>
<dbReference type="HOGENOM" id="CLU_1481371_0_0_14"/>
<dbReference type="OrthoDB" id="9928750at2"/>
<dbReference type="Proteomes" id="UP000000423">
    <property type="component" value="Chromosome"/>
</dbReference>
<dbReference type="GO" id="GO:0005886">
    <property type="term" value="C:plasma membrane"/>
    <property type="evidence" value="ECO:0007669"/>
    <property type="project" value="UniProtKB-SubCell"/>
</dbReference>
<sequence length="182" mass="21498">MMNNKNKFKNKEWKFSKKQVQLIYLTSSIISGLFLGLALLSTYLIAGLPNDNAFVLFVKEQKFYFPFFMTIGFINLIISMLTLLPTLKTLWRTVAKMHQYGDLSKEEFEALDILVEQIRNRYISVENIKAVISSNNYKTLDEELKKLEQQEKQLKIQEQEQKVKRLEQEIIKDDKTRVQSDY</sequence>
<evidence type="ECO:0000255" key="1"/>
<evidence type="ECO:0000305" key="2"/>
<proteinExistence type="predicted"/>
<comment type="subcellular location">
    <subcellularLocation>
        <location evidence="2">Cell membrane</location>
        <topology evidence="2">Multi-pass membrane protein</topology>
    </subcellularLocation>
</comment>
<protein>
    <recommendedName>
        <fullName>Uncharacterized protein UU159</fullName>
    </recommendedName>
</protein>
<organism>
    <name type="scientific">Ureaplasma parvum serovar 3 (strain ATCC 700970)</name>
    <dbReference type="NCBI Taxonomy" id="273119"/>
    <lineage>
        <taxon>Bacteria</taxon>
        <taxon>Bacillati</taxon>
        <taxon>Mycoplasmatota</taxon>
        <taxon>Mycoplasmoidales</taxon>
        <taxon>Mycoplasmoidaceae</taxon>
        <taxon>Ureaplasma</taxon>
    </lineage>
</organism>
<gene>
    <name type="ordered locus">UU159</name>
</gene>